<organism>
    <name type="scientific">Candida albicans (strain SC5314 / ATCC MYA-2876)</name>
    <name type="common">Yeast</name>
    <dbReference type="NCBI Taxonomy" id="237561"/>
    <lineage>
        <taxon>Eukaryota</taxon>
        <taxon>Fungi</taxon>
        <taxon>Dikarya</taxon>
        <taxon>Ascomycota</taxon>
        <taxon>Saccharomycotina</taxon>
        <taxon>Pichiomycetes</taxon>
        <taxon>Debaryomycetaceae</taxon>
        <taxon>Candida/Lodderomyces clade</taxon>
        <taxon>Candida</taxon>
    </lineage>
</organism>
<name>GAP3_CANAL</name>
<sequence length="599" mass="65578">MTTKEKDEFNIGSLQNSPESSTNMSPDVITTPISKWQAFKDSFKPPEQKPLASSSSSTSSLSASSPHHNDVANNYDIEKSLRPDQQGELKRELKNRHVQMIALGGSVGTGLLIGSGGALHQGGPAALLIAWGITGTMVFCIIHSLGELCVAFPVNGAFSTYANMFVDSSWAFAVGWNYAIMWLIVLPLELVAAAMCITYWNDEINPASWVAIFYVLIVVINIFGVKYYGDAEMYLTIFKIIAIVGFIILGVVLVCGGGPTHEFIGNKYWKQDGAFANGFKGVATTFVTASYSMAGSEMVGLASAEVANPQKSLPKAIRQVFWRIFLFYFLSLTFIGLLVPSNSPQLLGASGTSASPFVIAIKNGGIYALPSIFNACILLSVLSVGNSAVYGCSRTIQSLGAQGLGPKIFAYVDRKGRPLGGLVMSAIFGLLCFLSAYHDEATIFNWLLSVAGLATIFSWFNIGLCHVRFRLALRKQGRSLQELTFTALTGVWGSVYSMIFLCVVLVIQFWTALFPLGSKGKANAENFFQNYLGAVVILIFYVGHKLYTRNWKLCVKLEDIDLDSGRRSFDLDLIRAEIEEEKAANKAKPLYKRLWNYWC</sequence>
<gene>
    <name type="primary">HIP1</name>
    <name evidence="8" type="synonym">GAP3</name>
    <name type="ordered locus">CAALFM_C501800CA</name>
</gene>
<protein>
    <recommendedName>
        <fullName>Amino-acid permease GAP3</fullName>
    </recommendedName>
</protein>
<feature type="chain" id="PRO_0000439808" description="Amino-acid permease GAP3">
    <location>
        <begin position="1"/>
        <end position="599"/>
    </location>
</feature>
<feature type="transmembrane region" description="Helical" evidence="1">
    <location>
        <begin position="100"/>
        <end position="120"/>
    </location>
</feature>
<feature type="transmembrane region" description="Helical" evidence="1">
    <location>
        <begin position="122"/>
        <end position="142"/>
    </location>
</feature>
<feature type="transmembrane region" description="Helical" evidence="1">
    <location>
        <begin position="146"/>
        <end position="166"/>
    </location>
</feature>
<feature type="transmembrane region" description="Helical" evidence="1">
    <location>
        <begin position="180"/>
        <end position="200"/>
    </location>
</feature>
<feature type="transmembrane region" description="Helical" evidence="1">
    <location>
        <begin position="204"/>
        <end position="224"/>
    </location>
</feature>
<feature type="transmembrane region" description="Helical" evidence="1">
    <location>
        <begin position="235"/>
        <end position="255"/>
    </location>
</feature>
<feature type="transmembrane region" description="Helical" evidence="1">
    <location>
        <begin position="320"/>
        <end position="340"/>
    </location>
</feature>
<feature type="transmembrane region" description="Helical" evidence="1">
    <location>
        <begin position="364"/>
        <end position="384"/>
    </location>
</feature>
<feature type="transmembrane region" description="Helical" evidence="1">
    <location>
        <begin position="418"/>
        <end position="438"/>
    </location>
</feature>
<feature type="transmembrane region" description="Helical" evidence="1">
    <location>
        <begin position="443"/>
        <end position="463"/>
    </location>
</feature>
<feature type="transmembrane region" description="Helical" evidence="1">
    <location>
        <begin position="487"/>
        <end position="507"/>
    </location>
</feature>
<feature type="transmembrane region" description="Helical" evidence="1">
    <location>
        <begin position="527"/>
        <end position="547"/>
    </location>
</feature>
<feature type="region of interest" description="Disordered" evidence="2">
    <location>
        <begin position="1"/>
        <end position="80"/>
    </location>
</feature>
<feature type="compositionally biased region" description="Polar residues" evidence="2">
    <location>
        <begin position="12"/>
        <end position="25"/>
    </location>
</feature>
<feature type="compositionally biased region" description="Low complexity" evidence="2">
    <location>
        <begin position="51"/>
        <end position="65"/>
    </location>
</feature>
<proteinExistence type="evidence at transcript level"/>
<keyword id="KW-0029">Amino-acid transport</keyword>
<keyword id="KW-1003">Cell membrane</keyword>
<keyword id="KW-0472">Membrane</keyword>
<keyword id="KW-1185">Reference proteome</keyword>
<keyword id="KW-0812">Transmembrane</keyword>
<keyword id="KW-1133">Transmembrane helix</keyword>
<keyword id="KW-0813">Transport</keyword>
<reference key="1">
    <citation type="journal article" date="2004" name="Proc. Natl. Acad. Sci. U.S.A.">
        <title>The diploid genome sequence of Candida albicans.</title>
        <authorList>
            <person name="Jones T."/>
            <person name="Federspiel N.A."/>
            <person name="Chibana H."/>
            <person name="Dungan J."/>
            <person name="Kalman S."/>
            <person name="Magee B.B."/>
            <person name="Newport G."/>
            <person name="Thorstenson Y.R."/>
            <person name="Agabian N."/>
            <person name="Magee P.T."/>
            <person name="Davis R.W."/>
            <person name="Scherer S."/>
        </authorList>
    </citation>
    <scope>NUCLEOTIDE SEQUENCE [LARGE SCALE GENOMIC DNA]</scope>
    <source>
        <strain>SC5314 / ATCC MYA-2876</strain>
    </source>
</reference>
<reference key="2">
    <citation type="journal article" date="2007" name="Genome Biol.">
        <title>Assembly of the Candida albicans genome into sixteen supercontigs aligned on the eight chromosomes.</title>
        <authorList>
            <person name="van het Hoog M."/>
            <person name="Rast T.J."/>
            <person name="Martchenko M."/>
            <person name="Grindle S."/>
            <person name="Dignard D."/>
            <person name="Hogues H."/>
            <person name="Cuomo C."/>
            <person name="Berriman M."/>
            <person name="Scherer S."/>
            <person name="Magee B.B."/>
            <person name="Whiteway M."/>
            <person name="Chibana H."/>
            <person name="Nantel A."/>
            <person name="Magee P.T."/>
        </authorList>
    </citation>
    <scope>GENOME REANNOTATION</scope>
    <source>
        <strain>SC5314 / ATCC MYA-2876</strain>
    </source>
</reference>
<reference key="3">
    <citation type="journal article" date="2013" name="Genome Biol.">
        <title>Assembly of a phased diploid Candida albicans genome facilitates allele-specific measurements and provides a simple model for repeat and indel structure.</title>
        <authorList>
            <person name="Muzzey D."/>
            <person name="Schwartz K."/>
            <person name="Weissman J.S."/>
            <person name="Sherlock G."/>
        </authorList>
    </citation>
    <scope>NUCLEOTIDE SEQUENCE [LARGE SCALE GENOMIC DNA]</scope>
    <scope>GENOME REANNOTATION</scope>
    <source>
        <strain>SC5314 / ATCC MYA-2876</strain>
    </source>
</reference>
<reference key="4">
    <citation type="journal article" date="2005" name="Eukaryot. Cell">
        <title>Global role of the protein kinase Gcn2 in the human pathogen Candida albicans.</title>
        <authorList>
            <person name="Tournu H."/>
            <person name="Tripathi G."/>
            <person name="Bertram G."/>
            <person name="Macaskill S."/>
            <person name="Mavor A."/>
            <person name="Walker L."/>
            <person name="Odds F.C."/>
            <person name="Gow N.A."/>
            <person name="Brown A.J."/>
        </authorList>
    </citation>
    <scope>INDUCTION</scope>
</reference>
<reference key="5">
    <citation type="journal article" date="2005" name="Microbiology">
        <title>Functional analysis of the phospholipase C gene CaPLC1 and two unusual phospholipase C genes, CaPLC2 and CaPLC3, of Candida albicans.</title>
        <authorList>
            <person name="Kunze D."/>
            <person name="Melzer I."/>
            <person name="Bennett D."/>
            <person name="Sanglard D."/>
            <person name="MacCallum D."/>
            <person name="Norskau J."/>
            <person name="Coleman D.C."/>
            <person name="Odds F.C."/>
            <person name="Schafer W."/>
            <person name="Hube B."/>
        </authorList>
    </citation>
    <scope>INDUCTION</scope>
</reference>
<reference key="6">
    <citation type="journal article" date="2011" name="Eukaryot. Cell">
        <title>The Candida albicans GAP gene family encodes permeases involved in general and specific amino acid uptake and sensing.</title>
        <authorList>
            <person name="Kraidlova L."/>
            <person name="Van Zeebroeck G."/>
            <person name="Van Dijck P."/>
            <person name="Sychrova H."/>
        </authorList>
    </citation>
    <scope>FUNCTION</scope>
    <scope>SUBCELLULAR LOCATION</scope>
</reference>
<reference key="7">
    <citation type="journal article" date="2012" name="Cell">
        <title>A recently evolved transcriptional network controls biofilm development in Candida albicans.</title>
        <authorList>
            <person name="Nobile C.J."/>
            <person name="Fox E.P."/>
            <person name="Nett J.E."/>
            <person name="Sorrells T.R."/>
            <person name="Mitrovich Q.M."/>
            <person name="Hernday A.D."/>
            <person name="Tuch B.B."/>
            <person name="Andes D.R."/>
            <person name="Johnson A.D."/>
        </authorList>
    </citation>
    <scope>INDUCTION</scope>
</reference>
<reference key="8">
    <citation type="journal article" date="2016" name="MSphere">
        <title>Characterization of the Candida albicans amino acid permease family: Gap2 is the only general amino acid permease and Gap4 is an S-adenosylmethionine (SAM) transporter required for SAM-induced morphogenesis.</title>
        <authorList>
            <person name="Kraidlova L."/>
            <person name="Schrevens S."/>
            <person name="Tournu H."/>
            <person name="Van Zeebroeck G."/>
            <person name="Sychrova H."/>
            <person name="Van Dijck P."/>
        </authorList>
    </citation>
    <scope>FUNCTION</scope>
    <scope>INDUCTION</scope>
    <scope>SUBCELLULAR LOCATION</scope>
</reference>
<dbReference type="EMBL" id="CP017627">
    <property type="protein sequence ID" value="AOW29610.1"/>
    <property type="molecule type" value="Genomic_DNA"/>
</dbReference>
<dbReference type="RefSeq" id="XP_714611.2">
    <property type="nucleotide sequence ID" value="XM_709518.2"/>
</dbReference>
<dbReference type="SMR" id="A0A1D8PN88"/>
<dbReference type="STRING" id="237561.A0A1D8PN88"/>
<dbReference type="EnsemblFungi" id="C5_01800C_A-T">
    <property type="protein sequence ID" value="C5_01800C_A-T-p1"/>
    <property type="gene ID" value="C5_01800C_A"/>
</dbReference>
<dbReference type="GeneID" id="3643761"/>
<dbReference type="KEGG" id="cal:CAALFM_C501800CA"/>
<dbReference type="CGD" id="CAL0000181363">
    <property type="gene designation" value="HIP1"/>
</dbReference>
<dbReference type="VEuPathDB" id="FungiDB:C5_01800C_A"/>
<dbReference type="eggNOG" id="KOG1286">
    <property type="taxonomic scope" value="Eukaryota"/>
</dbReference>
<dbReference type="InParanoid" id="A0A1D8PN88"/>
<dbReference type="OrthoDB" id="3900342at2759"/>
<dbReference type="Proteomes" id="UP000000559">
    <property type="component" value="Chromosome 5"/>
</dbReference>
<dbReference type="GO" id="GO:0016020">
    <property type="term" value="C:membrane"/>
    <property type="evidence" value="ECO:0000318"/>
    <property type="project" value="GO_Central"/>
</dbReference>
<dbReference type="GO" id="GO:0005886">
    <property type="term" value="C:plasma membrane"/>
    <property type="evidence" value="ECO:0007669"/>
    <property type="project" value="UniProtKB-SubCell"/>
</dbReference>
<dbReference type="GO" id="GO:0015171">
    <property type="term" value="F:amino acid transmembrane transporter activity"/>
    <property type="evidence" value="ECO:0000314"/>
    <property type="project" value="CGD"/>
</dbReference>
<dbReference type="GO" id="GO:0003333">
    <property type="term" value="P:amino acid transmembrane transport"/>
    <property type="evidence" value="ECO:0000315"/>
    <property type="project" value="CGD"/>
</dbReference>
<dbReference type="FunFam" id="1.20.1740.10:FF:000131">
    <property type="entry name" value="General amino-acid permease GAP1"/>
    <property type="match status" value="1"/>
</dbReference>
<dbReference type="Gene3D" id="1.20.1740.10">
    <property type="entry name" value="Amino acid/polyamine transporter I"/>
    <property type="match status" value="1"/>
</dbReference>
<dbReference type="InterPro" id="IPR004841">
    <property type="entry name" value="AA-permease/SLC12A_dom"/>
</dbReference>
<dbReference type="InterPro" id="IPR004840">
    <property type="entry name" value="Amino_acid_permease_CS"/>
</dbReference>
<dbReference type="InterPro" id="IPR004762">
    <property type="entry name" value="Amino_acid_permease_fungi"/>
</dbReference>
<dbReference type="InterPro" id="IPR050524">
    <property type="entry name" value="APC_YAT"/>
</dbReference>
<dbReference type="NCBIfam" id="TIGR00913">
    <property type="entry name" value="2A0310"/>
    <property type="match status" value="1"/>
</dbReference>
<dbReference type="PANTHER" id="PTHR43341">
    <property type="entry name" value="AMINO ACID PERMEASE"/>
    <property type="match status" value="1"/>
</dbReference>
<dbReference type="PANTHER" id="PTHR43341:SF1">
    <property type="entry name" value="GENERAL AMINO-ACID PERMEASE GAP1"/>
    <property type="match status" value="1"/>
</dbReference>
<dbReference type="Pfam" id="PF00324">
    <property type="entry name" value="AA_permease"/>
    <property type="match status" value="1"/>
</dbReference>
<dbReference type="PROSITE" id="PS00218">
    <property type="entry name" value="AMINO_ACID_PERMEASE_1"/>
    <property type="match status" value="1"/>
</dbReference>
<evidence type="ECO:0000255" key="1"/>
<evidence type="ECO:0000256" key="2">
    <source>
        <dbReference type="SAM" id="MobiDB-lite"/>
    </source>
</evidence>
<evidence type="ECO:0000269" key="3">
    <source>
    </source>
</evidence>
<evidence type="ECO:0000269" key="4">
    <source>
    </source>
</evidence>
<evidence type="ECO:0000269" key="5">
    <source>
    </source>
</evidence>
<evidence type="ECO:0000269" key="6">
    <source>
    </source>
</evidence>
<evidence type="ECO:0000269" key="7">
    <source>
    </source>
</evidence>
<evidence type="ECO:0000303" key="8">
    <source>
    </source>
</evidence>
<evidence type="ECO:0000305" key="9"/>
<comment type="function">
    <text evidence="5 7">Amino-acid permease that is able to transport phenylalanine (PubMed:21764911, PubMed:28028545).</text>
</comment>
<comment type="subcellular location">
    <subcellularLocation>
        <location evidence="5 7">Cell membrane</location>
        <topology evidence="1">Multi-pass membrane protein</topology>
    </subcellularLocation>
</comment>
<comment type="induction">
    <text evidence="3 4 6 7">Expression is under control of the CSY1 amino-acid sensor (PubMed:28028545). Expression is also regulated by PLC1 and GCN4 (PubMed:16207920, PubMed:16215176). Expression is induced during development of biofilm (PubMed:22265407).</text>
</comment>
<comment type="similarity">
    <text evidence="9">Belongs to the amino acid-polyamine-organocation (APC) superfamily. YAT (TC 2.A.3.10) family.</text>
</comment>
<accession>A0A1D8PN88</accession>